<dbReference type="EMBL" id="AB098254">
    <property type="protein sequence ID" value="BAC77707.1"/>
    <property type="molecule type" value="mRNA"/>
</dbReference>
<dbReference type="PDB" id="1UKM">
    <property type="method" value="X-ray"/>
    <property type="resolution" value="1.90 A"/>
    <property type="chains" value="B=27-154"/>
</dbReference>
<dbReference type="PDB" id="1V7P">
    <property type="method" value="X-ray"/>
    <property type="resolution" value="1.90 A"/>
    <property type="chains" value="B=27-154"/>
</dbReference>
<dbReference type="PDBsum" id="1UKM"/>
<dbReference type="PDBsum" id="1V7P"/>
<dbReference type="SMR" id="Q7T2Q0"/>
<dbReference type="IntAct" id="Q7T2Q0">
    <property type="interactions" value="1"/>
</dbReference>
<dbReference type="iPTMnet" id="Q7T2Q0"/>
<dbReference type="EvolutionaryTrace" id="Q7T2Q0"/>
<dbReference type="GO" id="GO:0005576">
    <property type="term" value="C:extracellular region"/>
    <property type="evidence" value="ECO:0007669"/>
    <property type="project" value="UniProtKB-SubCell"/>
</dbReference>
<dbReference type="GO" id="GO:0090729">
    <property type="term" value="F:toxin activity"/>
    <property type="evidence" value="ECO:0007669"/>
    <property type="project" value="UniProtKB-KW"/>
</dbReference>
<dbReference type="FunFam" id="3.10.100.10:FF:000087">
    <property type="entry name" value="Snaclec rhodocetin subunit delta"/>
    <property type="match status" value="1"/>
</dbReference>
<dbReference type="Gene3D" id="3.10.100.10">
    <property type="entry name" value="Mannose-Binding Protein A, subunit A"/>
    <property type="match status" value="1"/>
</dbReference>
<dbReference type="InterPro" id="IPR001304">
    <property type="entry name" value="C-type_lectin-like"/>
</dbReference>
<dbReference type="InterPro" id="IPR016186">
    <property type="entry name" value="C-type_lectin-like/link_sf"/>
</dbReference>
<dbReference type="InterPro" id="IPR050111">
    <property type="entry name" value="C-type_lectin/snaclec_domain"/>
</dbReference>
<dbReference type="InterPro" id="IPR016187">
    <property type="entry name" value="CTDL_fold"/>
</dbReference>
<dbReference type="PANTHER" id="PTHR22803">
    <property type="entry name" value="MANNOSE, PHOSPHOLIPASE, LECTIN RECEPTOR RELATED"/>
    <property type="match status" value="1"/>
</dbReference>
<dbReference type="Pfam" id="PF00059">
    <property type="entry name" value="Lectin_C"/>
    <property type="match status" value="1"/>
</dbReference>
<dbReference type="PRINTS" id="PR01504">
    <property type="entry name" value="PNCREATITSAP"/>
</dbReference>
<dbReference type="SMART" id="SM00034">
    <property type="entry name" value="CLECT"/>
    <property type="match status" value="1"/>
</dbReference>
<dbReference type="SUPFAM" id="SSF56436">
    <property type="entry name" value="C-type lectin-like"/>
    <property type="match status" value="1"/>
</dbReference>
<dbReference type="PROSITE" id="PS50041">
    <property type="entry name" value="C_TYPE_LECTIN_2"/>
    <property type="match status" value="1"/>
</dbReference>
<comment type="function">
    <text evidence="2">EMS16 is a potent and selective inhibitor of alpha-2/beta-1 (ITGA2/ITGB1) integrin and acts as a potent antagonist of platelet aggregation and cell migration. Binds specifically to the I domain of the alpha-2 subunit, in a metal ion-independent fashion.</text>
</comment>
<comment type="subunit">
    <text evidence="4 5">Heterodimer of subunits A and B; disulfide-linked.</text>
</comment>
<comment type="subcellular location">
    <subcellularLocation>
        <location evidence="2 3">Secreted</location>
    </subcellularLocation>
</comment>
<comment type="tissue specificity">
    <text evidence="10 11">Expressed by the venom gland.</text>
</comment>
<comment type="similarity">
    <text evidence="9">Belongs to the snaclec family.</text>
</comment>
<feature type="signal peptide" evidence="2 3">
    <location>
        <begin position="1"/>
        <end position="26"/>
    </location>
</feature>
<feature type="chain" id="PRO_0000318803" description="Snaclec EMS16 subunit beta">
    <location>
        <begin position="27"/>
        <end position="154"/>
    </location>
</feature>
<feature type="domain" description="C-type lectin" evidence="1">
    <location>
        <begin position="34"/>
        <end position="147"/>
    </location>
</feature>
<feature type="site" description="Key residue for binding with integrin">
    <location>
        <position position="88"/>
    </location>
</feature>
<feature type="site" description="Key residue for binding with integrin">
    <location>
        <position position="118"/>
    </location>
</feature>
<feature type="site" description="Key residue for binding with integrin">
    <location>
        <position position="127"/>
    </location>
</feature>
<feature type="site" description="Key residue for binding with integrin">
    <location>
        <position position="140"/>
    </location>
</feature>
<feature type="site" description="Key residue for binding with integrin">
    <location>
        <position position="141"/>
    </location>
</feature>
<feature type="glycosylation site" description="N-linked (GlcNAc...) asparagine" evidence="4">
    <location>
        <position position="47"/>
    </location>
</feature>
<feature type="disulfide bond" evidence="1 4">
    <location>
        <begin position="27"/>
        <end position="38"/>
    </location>
</feature>
<feature type="disulfide bond" evidence="1 4">
    <location>
        <begin position="55"/>
        <end position="146"/>
    </location>
</feature>
<feature type="disulfide bond" description="Interchain (with C-104 in subunit A)" evidence="1 4">
    <location>
        <position position="100"/>
    </location>
</feature>
<feature type="disulfide bond" evidence="1 4">
    <location>
        <begin position="121"/>
        <end position="138"/>
    </location>
</feature>
<feature type="sequence conflict" description="In Ref. 3." evidence="9" ref="3">
    <original>G</original>
    <variation>S</variation>
    <location>
        <position position="69"/>
    </location>
</feature>
<feature type="strand" evidence="12">
    <location>
        <begin position="32"/>
        <end position="34"/>
    </location>
</feature>
<feature type="strand" evidence="12">
    <location>
        <begin position="37"/>
        <end position="46"/>
    </location>
</feature>
<feature type="helix" evidence="12">
    <location>
        <begin position="48"/>
        <end position="58"/>
    </location>
</feature>
<feature type="helix" evidence="12">
    <location>
        <begin position="70"/>
        <end position="83"/>
    </location>
</feature>
<feature type="strand" evidence="12">
    <location>
        <begin position="88"/>
        <end position="94"/>
    </location>
</feature>
<feature type="turn" evidence="12">
    <location>
        <begin position="96"/>
        <end position="99"/>
    </location>
</feature>
<feature type="strand" evidence="12">
    <location>
        <begin position="102"/>
        <end position="104"/>
    </location>
</feature>
<feature type="strand" evidence="12">
    <location>
        <begin position="120"/>
        <end position="126"/>
    </location>
</feature>
<feature type="strand" evidence="12">
    <location>
        <begin position="131"/>
        <end position="137"/>
    </location>
</feature>
<feature type="strand" evidence="12">
    <location>
        <begin position="142"/>
        <end position="149"/>
    </location>
</feature>
<proteinExistence type="evidence at protein level"/>
<keyword id="KW-0002">3D-structure</keyword>
<keyword id="KW-0903">Direct protein sequencing</keyword>
<keyword id="KW-1015">Disulfide bond</keyword>
<keyword id="KW-0325">Glycoprotein</keyword>
<keyword id="KW-1199">Hemostasis impairing toxin</keyword>
<keyword id="KW-1201">Platelet aggregation inhibiting toxin</keyword>
<keyword id="KW-0964">Secreted</keyword>
<keyword id="KW-0732">Signal</keyword>
<keyword id="KW-0800">Toxin</keyword>
<protein>
    <recommendedName>
        <fullName evidence="6 7 8">Snaclec EMS16 subunit beta</fullName>
        <shortName evidence="6 7 8">EMS16B</shortName>
    </recommendedName>
</protein>
<accession>Q7T2Q0</accession>
<evidence type="ECO:0000255" key="1">
    <source>
        <dbReference type="PROSITE-ProRule" id="PRU00040"/>
    </source>
</evidence>
<evidence type="ECO:0000269" key="2">
    <source>
    </source>
</evidence>
<evidence type="ECO:0000269" key="3">
    <source>
    </source>
</evidence>
<evidence type="ECO:0000269" key="4">
    <source>
    </source>
</evidence>
<evidence type="ECO:0000269" key="5">
    <source>
    </source>
</evidence>
<evidence type="ECO:0000303" key="6">
    <source>
    </source>
</evidence>
<evidence type="ECO:0000303" key="7">
    <source>
    </source>
</evidence>
<evidence type="ECO:0000303" key="8">
    <source>
    </source>
</evidence>
<evidence type="ECO:0000305" key="9"/>
<evidence type="ECO:0000305" key="10">
    <source>
    </source>
</evidence>
<evidence type="ECO:0000305" key="11">
    <source>
    </source>
</evidence>
<evidence type="ECO:0007829" key="12">
    <source>
        <dbReference type="PDB" id="1UKM"/>
    </source>
</evidence>
<name>SLB_ECHML</name>
<sequence>MGRLISVRFSLLVVFLSLSGIGAGLCCPLGWSSFDQHCYKVFEPVKNWTEAEEICMQQHKGSRLASIHGSEEEAFVSKLASKALKFTSMWIGLNNPWKDCKWEWSDNARFDYKAWKRRPYCTVMVVKPDRIFWFTRGCEKSVSFVCKFLTDPAV</sequence>
<reference key="1">
    <citation type="journal article" date="2003" name="J. Biochem.">
        <title>Characterization and preliminary crystallographic studies of EMS16, an antagonist of collagen receptor (GPIa/IIa) from the venom of Echis multisquamatus.</title>
        <authorList>
            <person name="Okuda D."/>
            <person name="Horii K."/>
            <person name="Mizuno H."/>
            <person name="Morita T."/>
        </authorList>
    </citation>
    <scope>NUCLEOTIDE SEQUENCE [MRNA]</scope>
    <scope>PROTEIN SEQUENCE OF 27-52</scope>
    <scope>SUBCELLULAR LOCATION</scope>
    <source>
        <tissue>Venom</tissue>
        <tissue>Venom gland</tissue>
    </source>
</reference>
<reference key="2">
    <citation type="journal article" date="2000" name="Biochemistry">
        <title>Isolation and characterization of EMS16, a C-lectin type protein from Echis multisquamatus venom, a potent and selective inhibitor of the alpha2beta1 integrin.</title>
        <authorList>
            <person name="Marcinkiewicz C."/>
            <person name="Lobb R.R."/>
            <person name="Marcinkiewicz M.M."/>
            <person name="Daniel J.L."/>
            <person name="Smith J.B."/>
            <person name="Dangelmaier C."/>
            <person name="Weinreb P.H."/>
            <person name="Beacham D.A."/>
            <person name="Niewiarowski S."/>
        </authorList>
    </citation>
    <scope>PROTEIN SEQUENCE OF 27-67</scope>
    <scope>SUBCELLULAR LOCATION</scope>
    <scope>FUNCTION</scope>
    <source>
        <tissue>Venom</tissue>
    </source>
</reference>
<reference key="3">
    <citation type="journal article" date="2003" name="Biochemistry">
        <title>Structural characterization of EMS16, an antagonist of collagen receptor (GPIa/IIa) from the venom of Echis multisquamatus.</title>
        <authorList>
            <person name="Horii K."/>
            <person name="Okuda D."/>
            <person name="Morita T."/>
            <person name="Mizuno H."/>
        </authorList>
    </citation>
    <scope>X-RAY CRYSTALLOGRAPHY (1.9 ANGSTROMS) OF 27-154 IN COMPLEX WITH EMS16A</scope>
    <scope>GLYCOSYLATION AT ASN-47</scope>
    <scope>DISULFIDE BONDS</scope>
</reference>
<reference key="4">
    <citation type="journal article" date="2004" name="J. Mol. Biol.">
        <title>Crystal structure of EMS16 in complex with the integrin alpha2-I domain.</title>
        <authorList>
            <person name="Horii K."/>
            <person name="Okuda D."/>
            <person name="Morita T."/>
            <person name="Mizuno H."/>
        </authorList>
    </citation>
    <scope>X-RAY CRYSTALLOGRAPHY (1.9 ANGSTROMS) OF 27-154 IN COMPLEX WITH EMS16A AND ITGA2</scope>
    <scope>SITES</scope>
</reference>
<organism>
    <name type="scientific">Echis multisquamatus</name>
    <name type="common">Central Asian sand viper</name>
    <dbReference type="NCBI Taxonomy" id="93050"/>
    <lineage>
        <taxon>Eukaryota</taxon>
        <taxon>Metazoa</taxon>
        <taxon>Chordata</taxon>
        <taxon>Craniata</taxon>
        <taxon>Vertebrata</taxon>
        <taxon>Euteleostomi</taxon>
        <taxon>Lepidosauria</taxon>
        <taxon>Squamata</taxon>
        <taxon>Bifurcata</taxon>
        <taxon>Unidentata</taxon>
        <taxon>Episquamata</taxon>
        <taxon>Toxicofera</taxon>
        <taxon>Serpentes</taxon>
        <taxon>Colubroidea</taxon>
        <taxon>Viperidae</taxon>
        <taxon>Viperinae</taxon>
        <taxon>Echis</taxon>
    </lineage>
</organism>